<evidence type="ECO:0000255" key="1">
    <source>
        <dbReference type="HAMAP-Rule" id="MF_00001"/>
    </source>
</evidence>
<name>PYRB_PSEA8</name>
<proteinExistence type="inferred from homology"/>
<accession>B7V3Y9</accession>
<dbReference type="EC" id="2.1.3.2" evidence="1"/>
<dbReference type="EMBL" id="FM209186">
    <property type="protein sequence ID" value="CAW25127.1"/>
    <property type="molecule type" value="Genomic_DNA"/>
</dbReference>
<dbReference type="RefSeq" id="WP_003084569.1">
    <property type="nucleotide sequence ID" value="NC_011770.1"/>
</dbReference>
<dbReference type="SMR" id="B7V3Y9"/>
<dbReference type="KEGG" id="pag:PLES_04001"/>
<dbReference type="HOGENOM" id="CLU_043846_2_0_6"/>
<dbReference type="UniPathway" id="UPA00070">
    <property type="reaction ID" value="UER00116"/>
</dbReference>
<dbReference type="GO" id="GO:0005829">
    <property type="term" value="C:cytosol"/>
    <property type="evidence" value="ECO:0007669"/>
    <property type="project" value="TreeGrafter"/>
</dbReference>
<dbReference type="GO" id="GO:0016597">
    <property type="term" value="F:amino acid binding"/>
    <property type="evidence" value="ECO:0007669"/>
    <property type="project" value="InterPro"/>
</dbReference>
<dbReference type="GO" id="GO:0004070">
    <property type="term" value="F:aspartate carbamoyltransferase activity"/>
    <property type="evidence" value="ECO:0007669"/>
    <property type="project" value="UniProtKB-UniRule"/>
</dbReference>
<dbReference type="GO" id="GO:0006207">
    <property type="term" value="P:'de novo' pyrimidine nucleobase biosynthetic process"/>
    <property type="evidence" value="ECO:0007669"/>
    <property type="project" value="InterPro"/>
</dbReference>
<dbReference type="GO" id="GO:0044205">
    <property type="term" value="P:'de novo' UMP biosynthetic process"/>
    <property type="evidence" value="ECO:0007669"/>
    <property type="project" value="UniProtKB-UniRule"/>
</dbReference>
<dbReference type="GO" id="GO:0006520">
    <property type="term" value="P:amino acid metabolic process"/>
    <property type="evidence" value="ECO:0007669"/>
    <property type="project" value="InterPro"/>
</dbReference>
<dbReference type="FunFam" id="3.40.50.1370:FF:000006">
    <property type="entry name" value="Aspartate carbamoyltransferase"/>
    <property type="match status" value="1"/>
</dbReference>
<dbReference type="FunFam" id="3.40.50.1370:FF:000007">
    <property type="entry name" value="Aspartate carbamoyltransferase"/>
    <property type="match status" value="1"/>
</dbReference>
<dbReference type="Gene3D" id="3.40.50.1370">
    <property type="entry name" value="Aspartate/ornithine carbamoyltransferase"/>
    <property type="match status" value="2"/>
</dbReference>
<dbReference type="HAMAP" id="MF_00001">
    <property type="entry name" value="Asp_carb_tr"/>
    <property type="match status" value="1"/>
</dbReference>
<dbReference type="InterPro" id="IPR006132">
    <property type="entry name" value="Asp/Orn_carbamoyltranf_P-bd"/>
</dbReference>
<dbReference type="InterPro" id="IPR006130">
    <property type="entry name" value="Asp/Orn_carbamoylTrfase"/>
</dbReference>
<dbReference type="InterPro" id="IPR036901">
    <property type="entry name" value="Asp/Orn_carbamoylTrfase_sf"/>
</dbReference>
<dbReference type="InterPro" id="IPR002082">
    <property type="entry name" value="Asp_carbamoyltransf"/>
</dbReference>
<dbReference type="InterPro" id="IPR006131">
    <property type="entry name" value="Asp_carbamoyltransf_Asp/Orn-bd"/>
</dbReference>
<dbReference type="NCBIfam" id="TIGR00670">
    <property type="entry name" value="asp_carb_tr"/>
    <property type="match status" value="1"/>
</dbReference>
<dbReference type="NCBIfam" id="NF002032">
    <property type="entry name" value="PRK00856.1"/>
    <property type="match status" value="1"/>
</dbReference>
<dbReference type="PANTHER" id="PTHR45753:SF6">
    <property type="entry name" value="ASPARTATE CARBAMOYLTRANSFERASE"/>
    <property type="match status" value="1"/>
</dbReference>
<dbReference type="PANTHER" id="PTHR45753">
    <property type="entry name" value="ORNITHINE CARBAMOYLTRANSFERASE, MITOCHONDRIAL"/>
    <property type="match status" value="1"/>
</dbReference>
<dbReference type="Pfam" id="PF00185">
    <property type="entry name" value="OTCace"/>
    <property type="match status" value="1"/>
</dbReference>
<dbReference type="Pfam" id="PF02729">
    <property type="entry name" value="OTCace_N"/>
    <property type="match status" value="1"/>
</dbReference>
<dbReference type="PRINTS" id="PR00100">
    <property type="entry name" value="AOTCASE"/>
</dbReference>
<dbReference type="PRINTS" id="PR00101">
    <property type="entry name" value="ATCASE"/>
</dbReference>
<dbReference type="SUPFAM" id="SSF53671">
    <property type="entry name" value="Aspartate/ornithine carbamoyltransferase"/>
    <property type="match status" value="1"/>
</dbReference>
<dbReference type="PROSITE" id="PS00097">
    <property type="entry name" value="CARBAMOYLTRANSFERASE"/>
    <property type="match status" value="1"/>
</dbReference>
<protein>
    <recommendedName>
        <fullName evidence="1">Aspartate carbamoyltransferase catalytic subunit</fullName>
        <ecNumber evidence="1">2.1.3.2</ecNumber>
    </recommendedName>
    <alternativeName>
        <fullName evidence="1">Aspartate transcarbamylase</fullName>
        <shortName evidence="1">ATCase</shortName>
    </alternativeName>
</protein>
<keyword id="KW-0665">Pyrimidine biosynthesis</keyword>
<keyword id="KW-0808">Transferase</keyword>
<comment type="function">
    <text evidence="1">Catalyzes the condensation of carbamoyl phosphate and aspartate to form carbamoyl aspartate and inorganic phosphate, the committed step in the de novo pyrimidine nucleotide biosynthesis pathway.</text>
</comment>
<comment type="catalytic activity">
    <reaction evidence="1">
        <text>carbamoyl phosphate + L-aspartate = N-carbamoyl-L-aspartate + phosphate + H(+)</text>
        <dbReference type="Rhea" id="RHEA:20013"/>
        <dbReference type="ChEBI" id="CHEBI:15378"/>
        <dbReference type="ChEBI" id="CHEBI:29991"/>
        <dbReference type="ChEBI" id="CHEBI:32814"/>
        <dbReference type="ChEBI" id="CHEBI:43474"/>
        <dbReference type="ChEBI" id="CHEBI:58228"/>
        <dbReference type="EC" id="2.1.3.2"/>
    </reaction>
</comment>
<comment type="pathway">
    <text evidence="1">Pyrimidine metabolism; UMP biosynthesis via de novo pathway; (S)-dihydroorotate from bicarbonate: step 2/3.</text>
</comment>
<comment type="subunit">
    <text evidence="1">Heterododecamer (2C3:3R2) of six catalytic PyrB chains organized as two trimers (C3), and six regulatory PyrI chains organized as three dimers (R2).</text>
</comment>
<comment type="similarity">
    <text evidence="1">Belongs to the aspartate/ornithine carbamoyltransferase superfamily. ATCase family.</text>
</comment>
<sequence length="334" mass="36629">MPTDAKRPLQLNDQGQLRHFISLDGLPRELLTEILDTADSFLEVGARAVKKVPLLRGKTVCNVFFENSTRTRTTFELAAQRLSADVISLNVSTSSTSKGETLTDTLRNLEAMAADMFVVRHSDSGAAHFIAEHVSPNVAVINGGDGRHAHPTQGMLDMLTIRRHKGNFEQLSVAIVGDILHSRVARSNMLALKTLGCPDIRVIAPRTLLPIGLEEQYGVRVFTNADEGLKDVDVVIMLRLQRERMQGGLLPSEGEFFKLYGLTEKRLKLAKPDAIVMHPGPINRGVEIESAVADGAQSVILNQVTYGIAIRMAVLSMAMSGQNTQRQLEQEDAE</sequence>
<reference key="1">
    <citation type="journal article" date="2009" name="Genome Res.">
        <title>Newly introduced genomic prophage islands are critical determinants of in vivo competitiveness in the Liverpool epidemic strain of Pseudomonas aeruginosa.</title>
        <authorList>
            <person name="Winstanley C."/>
            <person name="Langille M.G.I."/>
            <person name="Fothergill J.L."/>
            <person name="Kukavica-Ibrulj I."/>
            <person name="Paradis-Bleau C."/>
            <person name="Sanschagrin F."/>
            <person name="Thomson N.R."/>
            <person name="Winsor G.L."/>
            <person name="Quail M.A."/>
            <person name="Lennard N."/>
            <person name="Bignell A."/>
            <person name="Clarke L."/>
            <person name="Seeger K."/>
            <person name="Saunders D."/>
            <person name="Harris D."/>
            <person name="Parkhill J."/>
            <person name="Hancock R.E.W."/>
            <person name="Brinkman F.S.L."/>
            <person name="Levesque R.C."/>
        </authorList>
    </citation>
    <scope>NUCLEOTIDE SEQUENCE [LARGE SCALE GENOMIC DNA]</scope>
    <source>
        <strain>LESB58</strain>
    </source>
</reference>
<gene>
    <name evidence="1" type="primary">pyrB</name>
    <name type="ordered locus">PLES_04001</name>
</gene>
<organism>
    <name type="scientific">Pseudomonas aeruginosa (strain LESB58)</name>
    <dbReference type="NCBI Taxonomy" id="557722"/>
    <lineage>
        <taxon>Bacteria</taxon>
        <taxon>Pseudomonadati</taxon>
        <taxon>Pseudomonadota</taxon>
        <taxon>Gammaproteobacteria</taxon>
        <taxon>Pseudomonadales</taxon>
        <taxon>Pseudomonadaceae</taxon>
        <taxon>Pseudomonas</taxon>
    </lineage>
</organism>
<feature type="chain" id="PRO_1000191913" description="Aspartate carbamoyltransferase catalytic subunit">
    <location>
        <begin position="1"/>
        <end position="334"/>
    </location>
</feature>
<feature type="binding site" evidence="1">
    <location>
        <position position="70"/>
    </location>
    <ligand>
        <name>carbamoyl phosphate</name>
        <dbReference type="ChEBI" id="CHEBI:58228"/>
    </ligand>
</feature>
<feature type="binding site" evidence="1">
    <location>
        <position position="71"/>
    </location>
    <ligand>
        <name>carbamoyl phosphate</name>
        <dbReference type="ChEBI" id="CHEBI:58228"/>
    </ligand>
</feature>
<feature type="binding site" evidence="1">
    <location>
        <position position="98"/>
    </location>
    <ligand>
        <name>L-aspartate</name>
        <dbReference type="ChEBI" id="CHEBI:29991"/>
    </ligand>
</feature>
<feature type="binding site" evidence="1">
    <location>
        <position position="120"/>
    </location>
    <ligand>
        <name>carbamoyl phosphate</name>
        <dbReference type="ChEBI" id="CHEBI:58228"/>
    </ligand>
</feature>
<feature type="binding site" evidence="1">
    <location>
        <position position="150"/>
    </location>
    <ligand>
        <name>carbamoyl phosphate</name>
        <dbReference type="ChEBI" id="CHEBI:58228"/>
    </ligand>
</feature>
<feature type="binding site" evidence="1">
    <location>
        <position position="153"/>
    </location>
    <ligand>
        <name>carbamoyl phosphate</name>
        <dbReference type="ChEBI" id="CHEBI:58228"/>
    </ligand>
</feature>
<feature type="binding site" evidence="1">
    <location>
        <position position="183"/>
    </location>
    <ligand>
        <name>L-aspartate</name>
        <dbReference type="ChEBI" id="CHEBI:29991"/>
    </ligand>
</feature>
<feature type="binding site" evidence="1">
    <location>
        <position position="239"/>
    </location>
    <ligand>
        <name>L-aspartate</name>
        <dbReference type="ChEBI" id="CHEBI:29991"/>
    </ligand>
</feature>
<feature type="binding site" evidence="1">
    <location>
        <position position="280"/>
    </location>
    <ligand>
        <name>carbamoyl phosphate</name>
        <dbReference type="ChEBI" id="CHEBI:58228"/>
    </ligand>
</feature>
<feature type="binding site" evidence="1">
    <location>
        <position position="281"/>
    </location>
    <ligand>
        <name>carbamoyl phosphate</name>
        <dbReference type="ChEBI" id="CHEBI:58228"/>
    </ligand>
</feature>